<accession>Q17QI2</accession>
<proteinExistence type="evidence at transcript level"/>
<gene>
    <name type="primary">SSU72</name>
</gene>
<keyword id="KW-0175">Coiled coil</keyword>
<keyword id="KW-0963">Cytoplasm</keyword>
<keyword id="KW-0378">Hydrolase</keyword>
<keyword id="KW-0507">mRNA processing</keyword>
<keyword id="KW-0539">Nucleus</keyword>
<keyword id="KW-0904">Protein phosphatase</keyword>
<keyword id="KW-1185">Reference proteome</keyword>
<reference key="1">
    <citation type="submission" date="2006-06" db="EMBL/GenBank/DDBJ databases">
        <authorList>
            <consortium name="NIH - Mammalian Gene Collection (MGC) project"/>
        </authorList>
    </citation>
    <scope>NUCLEOTIDE SEQUENCE [LARGE SCALE MRNA]</scope>
    <source>
        <strain>Hereford</strain>
        <tissue>Fetal pons</tissue>
    </source>
</reference>
<comment type="function">
    <text evidence="1">Protein phosphatase that catalyzes the dephosphorylation of the C-terminal domain of RNA polymerase II. Plays a role in RNA processing and termination. Plays a role in pre-mRNA polyadenylation via its interaction with SYMPK (By similarity).</text>
</comment>
<comment type="catalytic activity">
    <reaction>
        <text>O-phospho-L-seryl-[protein] + H2O = L-seryl-[protein] + phosphate</text>
        <dbReference type="Rhea" id="RHEA:20629"/>
        <dbReference type="Rhea" id="RHEA-COMP:9863"/>
        <dbReference type="Rhea" id="RHEA-COMP:11604"/>
        <dbReference type="ChEBI" id="CHEBI:15377"/>
        <dbReference type="ChEBI" id="CHEBI:29999"/>
        <dbReference type="ChEBI" id="CHEBI:43474"/>
        <dbReference type="ChEBI" id="CHEBI:83421"/>
        <dbReference type="EC" id="3.1.3.16"/>
    </reaction>
</comment>
<comment type="catalytic activity">
    <reaction>
        <text>O-phospho-L-threonyl-[protein] + H2O = L-threonyl-[protein] + phosphate</text>
        <dbReference type="Rhea" id="RHEA:47004"/>
        <dbReference type="Rhea" id="RHEA-COMP:11060"/>
        <dbReference type="Rhea" id="RHEA-COMP:11605"/>
        <dbReference type="ChEBI" id="CHEBI:15377"/>
        <dbReference type="ChEBI" id="CHEBI:30013"/>
        <dbReference type="ChEBI" id="CHEBI:43474"/>
        <dbReference type="ChEBI" id="CHEBI:61977"/>
        <dbReference type="EC" id="3.1.3.16"/>
    </reaction>
</comment>
<comment type="subunit">
    <text evidence="2">Interacts with GTF2B (via C-terminus); this interaction is inhibited by SYMPK. Interacts with RB1. Interacts with CD226. Interacts with SYMPK.</text>
</comment>
<comment type="subcellular location">
    <subcellularLocation>
        <location evidence="1">Nucleus</location>
    </subcellularLocation>
    <subcellularLocation>
        <location evidence="1">Cytoplasm</location>
    </subcellularLocation>
    <text evidence="1">Predominantly in the cytosol.</text>
</comment>
<comment type="similarity">
    <text evidence="4">Belongs to the SSU72 phosphatase family.</text>
</comment>
<organism>
    <name type="scientific">Bos taurus</name>
    <name type="common">Bovine</name>
    <dbReference type="NCBI Taxonomy" id="9913"/>
    <lineage>
        <taxon>Eukaryota</taxon>
        <taxon>Metazoa</taxon>
        <taxon>Chordata</taxon>
        <taxon>Craniata</taxon>
        <taxon>Vertebrata</taxon>
        <taxon>Euteleostomi</taxon>
        <taxon>Mammalia</taxon>
        <taxon>Eutheria</taxon>
        <taxon>Laurasiatheria</taxon>
        <taxon>Artiodactyla</taxon>
        <taxon>Ruminantia</taxon>
        <taxon>Pecora</taxon>
        <taxon>Bovidae</taxon>
        <taxon>Bovinae</taxon>
        <taxon>Bos</taxon>
    </lineage>
</organism>
<feature type="chain" id="PRO_0000330011" description="RNA polymerase II subunit A C-terminal domain phosphatase SSU72">
    <location>
        <begin position="1"/>
        <end position="194"/>
    </location>
</feature>
<feature type="coiled-coil region" evidence="3">
    <location>
        <begin position="160"/>
        <end position="186"/>
    </location>
</feature>
<sequence length="194" mass="22588">MPSSPLRVAVVCSSNQNRSMEAHNILSKRGFSVRSFGTGTHVKLPGPAPDKPNVYDFKTTYDQMYNDLLRKDKELYTQNGILHMLDRNKRIKPRPERFQNCKDLFDLILTCEERVYDQVVEDLNSREQETCQPVHVINVDIQDNHEEATLGAFLICELCQCIQHTEDMENEIDELLQEFEEKSGRTFLHTVCFY</sequence>
<evidence type="ECO:0000250" key="1"/>
<evidence type="ECO:0000250" key="2">
    <source>
        <dbReference type="UniProtKB" id="Q9NP77"/>
    </source>
</evidence>
<evidence type="ECO:0000255" key="3"/>
<evidence type="ECO:0000305" key="4"/>
<protein>
    <recommendedName>
        <fullName>RNA polymerase II subunit A C-terminal domain phosphatase SSU72</fullName>
        <shortName>CTD phosphatase SSU72</shortName>
        <ecNumber>3.1.3.16</ecNumber>
    </recommendedName>
</protein>
<name>SSU72_BOVIN</name>
<dbReference type="EC" id="3.1.3.16"/>
<dbReference type="EMBL" id="BC118344">
    <property type="protein sequence ID" value="AAI18345.1"/>
    <property type="molecule type" value="mRNA"/>
</dbReference>
<dbReference type="RefSeq" id="NP_001069817.1">
    <property type="nucleotide sequence ID" value="NM_001076349.1"/>
</dbReference>
<dbReference type="SMR" id="Q17QI2"/>
<dbReference type="FunCoup" id="Q17QI2">
    <property type="interactions" value="4222"/>
</dbReference>
<dbReference type="STRING" id="9913.ENSBTAP00000003331"/>
<dbReference type="PaxDb" id="9913-ENSBTAP00000003331"/>
<dbReference type="GeneID" id="614837"/>
<dbReference type="KEGG" id="bta:614837"/>
<dbReference type="CTD" id="29101"/>
<dbReference type="VEuPathDB" id="HostDB:ENSBTAG00000002575"/>
<dbReference type="eggNOG" id="KOG2424">
    <property type="taxonomic scope" value="Eukaryota"/>
</dbReference>
<dbReference type="HOGENOM" id="CLU_062463_2_2_1"/>
<dbReference type="InParanoid" id="Q17QI2"/>
<dbReference type="OMA" id="PNCYEFG"/>
<dbReference type="OrthoDB" id="57957at2759"/>
<dbReference type="Reactome" id="R-BTA-6807505">
    <property type="pathway name" value="RNA polymerase II transcribes snRNA genes"/>
</dbReference>
<dbReference type="Proteomes" id="UP000009136">
    <property type="component" value="Chromosome 16"/>
</dbReference>
<dbReference type="Bgee" id="ENSBTAG00000002575">
    <property type="expression patterns" value="Expressed in oocyte and 107 other cell types or tissues"/>
</dbReference>
<dbReference type="GO" id="GO:0005737">
    <property type="term" value="C:cytoplasm"/>
    <property type="evidence" value="ECO:0007669"/>
    <property type="project" value="UniProtKB-SubCell"/>
</dbReference>
<dbReference type="GO" id="GO:0005847">
    <property type="term" value="C:mRNA cleavage and polyadenylation specificity factor complex"/>
    <property type="evidence" value="ECO:0000318"/>
    <property type="project" value="GO_Central"/>
</dbReference>
<dbReference type="GO" id="GO:0008420">
    <property type="term" value="F:RNA polymerase II CTD heptapeptide repeat phosphatase activity"/>
    <property type="evidence" value="ECO:0000250"/>
    <property type="project" value="UniProtKB"/>
</dbReference>
<dbReference type="GO" id="GO:0180010">
    <property type="term" value="P:co-transcriptional mRNA 3'-end processing, cleavage and polyadenylation pathway"/>
    <property type="evidence" value="ECO:0000250"/>
    <property type="project" value="UniProtKB"/>
</dbReference>
<dbReference type="GO" id="GO:0006369">
    <property type="term" value="P:termination of RNA polymerase II transcription"/>
    <property type="evidence" value="ECO:0000318"/>
    <property type="project" value="GO_Central"/>
</dbReference>
<dbReference type="FunFam" id="3.40.50.2300:FF:000039">
    <property type="entry name" value="RNA polymerase II subunit A C-terminal domain phosphatase"/>
    <property type="match status" value="1"/>
</dbReference>
<dbReference type="FunFam" id="3.40.50.2300:FF:000066">
    <property type="entry name" value="RNA polymerase II subunit A C-terminal domain phosphatase SSU72"/>
    <property type="match status" value="1"/>
</dbReference>
<dbReference type="Gene3D" id="3.40.50.2300">
    <property type="match status" value="2"/>
</dbReference>
<dbReference type="InterPro" id="IPR006811">
    <property type="entry name" value="RNA_pol_II_suA"/>
</dbReference>
<dbReference type="PANTHER" id="PTHR20383">
    <property type="entry name" value="RNA POLYMERASE II SUBUNIT A C-TERMINAL DOMAIN PHOSPHATASE"/>
    <property type="match status" value="1"/>
</dbReference>
<dbReference type="Pfam" id="PF04722">
    <property type="entry name" value="Ssu72"/>
    <property type="match status" value="1"/>
</dbReference>